<name>NTF2_KLULA</name>
<organism>
    <name type="scientific">Kluyveromyces lactis (strain ATCC 8585 / CBS 2359 / DSM 70799 / NBRC 1267 / NRRL Y-1140 / WM37)</name>
    <name type="common">Yeast</name>
    <name type="synonym">Candida sphaerica</name>
    <dbReference type="NCBI Taxonomy" id="284590"/>
    <lineage>
        <taxon>Eukaryota</taxon>
        <taxon>Fungi</taxon>
        <taxon>Dikarya</taxon>
        <taxon>Ascomycota</taxon>
        <taxon>Saccharomycotina</taxon>
        <taxon>Saccharomycetes</taxon>
        <taxon>Saccharomycetales</taxon>
        <taxon>Saccharomycetaceae</taxon>
        <taxon>Kluyveromyces</taxon>
    </lineage>
</organism>
<evidence type="ECO:0000250" key="1"/>
<evidence type="ECO:0000255" key="2">
    <source>
        <dbReference type="PROSITE-ProRule" id="PRU00137"/>
    </source>
</evidence>
<gene>
    <name type="primary">NTF2</name>
    <name type="ordered locus">KLLA0D13508g</name>
</gene>
<dbReference type="EMBL" id="CR382124">
    <property type="protein sequence ID" value="CAH00761.1"/>
    <property type="molecule type" value="Genomic_DNA"/>
</dbReference>
<dbReference type="RefSeq" id="XP_453665.1">
    <property type="nucleotide sequence ID" value="XM_453665.1"/>
</dbReference>
<dbReference type="SMR" id="Q6CQX4"/>
<dbReference type="FunCoup" id="Q6CQX4">
    <property type="interactions" value="1241"/>
</dbReference>
<dbReference type="STRING" id="284590.Q6CQX4"/>
<dbReference type="PaxDb" id="284590-Q6CQX4"/>
<dbReference type="KEGG" id="kla:KLLA0_D13508g"/>
<dbReference type="eggNOG" id="KOG2104">
    <property type="taxonomic scope" value="Eukaryota"/>
</dbReference>
<dbReference type="HOGENOM" id="CLU_131642_0_0_1"/>
<dbReference type="InParanoid" id="Q6CQX4"/>
<dbReference type="OMA" id="QFVEYYY"/>
<dbReference type="Proteomes" id="UP000000598">
    <property type="component" value="Chromosome D"/>
</dbReference>
<dbReference type="GO" id="GO:0005737">
    <property type="term" value="C:cytoplasm"/>
    <property type="evidence" value="ECO:0007669"/>
    <property type="project" value="UniProtKB-SubCell"/>
</dbReference>
<dbReference type="GO" id="GO:0006913">
    <property type="term" value="P:nucleocytoplasmic transport"/>
    <property type="evidence" value="ECO:0007669"/>
    <property type="project" value="InterPro"/>
</dbReference>
<dbReference type="GO" id="GO:0015031">
    <property type="term" value="P:protein transport"/>
    <property type="evidence" value="ECO:0007669"/>
    <property type="project" value="UniProtKB-KW"/>
</dbReference>
<dbReference type="CDD" id="cd00780">
    <property type="entry name" value="NTF2"/>
    <property type="match status" value="1"/>
</dbReference>
<dbReference type="FunFam" id="3.10.450.50:FF:000005">
    <property type="entry name" value="Nuclear transport factor 2"/>
    <property type="match status" value="1"/>
</dbReference>
<dbReference type="Gene3D" id="3.10.450.50">
    <property type="match status" value="1"/>
</dbReference>
<dbReference type="InterPro" id="IPR045875">
    <property type="entry name" value="NTF2"/>
</dbReference>
<dbReference type="InterPro" id="IPR032710">
    <property type="entry name" value="NTF2-like_dom_sf"/>
</dbReference>
<dbReference type="InterPro" id="IPR002075">
    <property type="entry name" value="NTF2_dom"/>
</dbReference>
<dbReference type="InterPro" id="IPR018222">
    <property type="entry name" value="Nuclear_transport_factor_2_euk"/>
</dbReference>
<dbReference type="PANTHER" id="PTHR12612">
    <property type="entry name" value="NUCLEAR TRANSPORT FACTOR 2"/>
    <property type="match status" value="1"/>
</dbReference>
<dbReference type="Pfam" id="PF02136">
    <property type="entry name" value="NTF2"/>
    <property type="match status" value="1"/>
</dbReference>
<dbReference type="SUPFAM" id="SSF54427">
    <property type="entry name" value="NTF2-like"/>
    <property type="match status" value="1"/>
</dbReference>
<dbReference type="PROSITE" id="PS50177">
    <property type="entry name" value="NTF2_DOMAIN"/>
    <property type="match status" value="1"/>
</dbReference>
<sequence length="125" mass="14405">MSVDFSSLAQQFTEFYYNQFDSDRTQLGNLYREQSMLTFETTQLQGAKDIVEKLVSLPFQKVAHRITTLDAQPASPNGDVLVMITGDLLIDEEQNPQRFSQVFHLMPEGSSYYVYNDIFRLNYSA</sequence>
<proteinExistence type="inferred from homology"/>
<protein>
    <recommendedName>
        <fullName>Nuclear transport factor 2</fullName>
        <shortName>NTF-2</shortName>
    </recommendedName>
</protein>
<feature type="chain" id="PRO_0000194788" description="Nuclear transport factor 2">
    <location>
        <begin position="1"/>
        <end position="125"/>
    </location>
</feature>
<feature type="domain" description="NTF2" evidence="2">
    <location>
        <begin position="8"/>
        <end position="121"/>
    </location>
</feature>
<keyword id="KW-0963">Cytoplasm</keyword>
<keyword id="KW-0653">Protein transport</keyword>
<keyword id="KW-1185">Reference proteome</keyword>
<keyword id="KW-0813">Transport</keyword>
<accession>Q6CQX4</accession>
<reference key="1">
    <citation type="journal article" date="2004" name="Nature">
        <title>Genome evolution in yeasts.</title>
        <authorList>
            <person name="Dujon B."/>
            <person name="Sherman D."/>
            <person name="Fischer G."/>
            <person name="Durrens P."/>
            <person name="Casaregola S."/>
            <person name="Lafontaine I."/>
            <person name="de Montigny J."/>
            <person name="Marck C."/>
            <person name="Neuveglise C."/>
            <person name="Talla E."/>
            <person name="Goffard N."/>
            <person name="Frangeul L."/>
            <person name="Aigle M."/>
            <person name="Anthouard V."/>
            <person name="Babour A."/>
            <person name="Barbe V."/>
            <person name="Barnay S."/>
            <person name="Blanchin S."/>
            <person name="Beckerich J.-M."/>
            <person name="Beyne E."/>
            <person name="Bleykasten C."/>
            <person name="Boisrame A."/>
            <person name="Boyer J."/>
            <person name="Cattolico L."/>
            <person name="Confanioleri F."/>
            <person name="de Daruvar A."/>
            <person name="Despons L."/>
            <person name="Fabre E."/>
            <person name="Fairhead C."/>
            <person name="Ferry-Dumazet H."/>
            <person name="Groppi A."/>
            <person name="Hantraye F."/>
            <person name="Hennequin C."/>
            <person name="Jauniaux N."/>
            <person name="Joyet P."/>
            <person name="Kachouri R."/>
            <person name="Kerrest A."/>
            <person name="Koszul R."/>
            <person name="Lemaire M."/>
            <person name="Lesur I."/>
            <person name="Ma L."/>
            <person name="Muller H."/>
            <person name="Nicaud J.-M."/>
            <person name="Nikolski M."/>
            <person name="Oztas S."/>
            <person name="Ozier-Kalogeropoulos O."/>
            <person name="Pellenz S."/>
            <person name="Potier S."/>
            <person name="Richard G.-F."/>
            <person name="Straub M.-L."/>
            <person name="Suleau A."/>
            <person name="Swennen D."/>
            <person name="Tekaia F."/>
            <person name="Wesolowski-Louvel M."/>
            <person name="Westhof E."/>
            <person name="Wirth B."/>
            <person name="Zeniou-Meyer M."/>
            <person name="Zivanovic Y."/>
            <person name="Bolotin-Fukuhara M."/>
            <person name="Thierry A."/>
            <person name="Bouchier C."/>
            <person name="Caudron B."/>
            <person name="Scarpelli C."/>
            <person name="Gaillardin C."/>
            <person name="Weissenbach J."/>
            <person name="Wincker P."/>
            <person name="Souciet J.-L."/>
        </authorList>
    </citation>
    <scope>NUCLEOTIDE SEQUENCE [LARGE SCALE GENOMIC DNA]</scope>
    <source>
        <strain>ATCC 8585 / CBS 2359 / DSM 70799 / NBRC 1267 / NRRL Y-1140 / WM37</strain>
    </source>
</reference>
<comment type="function">
    <text evidence="1">Facilitates protein transport into the nucleus. Could be part of a multicomponent system of cytosolic factors that assemble at the pore complex during nuclear import (By similarity).</text>
</comment>
<comment type="subcellular location">
    <subcellularLocation>
        <location evidence="1">Cytoplasm</location>
    </subcellularLocation>
</comment>